<comment type="function">
    <text evidence="1">Catalyzes the ATP-dependent conversion of 7-carboxy-7-deazaguanine (CDG) to 7-cyano-7-deazaguanine (preQ(0)).</text>
</comment>
<comment type="catalytic activity">
    <reaction evidence="1">
        <text>7-carboxy-7-deazaguanine + NH4(+) + ATP = 7-cyano-7-deazaguanine + ADP + phosphate + H2O + H(+)</text>
        <dbReference type="Rhea" id="RHEA:27982"/>
        <dbReference type="ChEBI" id="CHEBI:15377"/>
        <dbReference type="ChEBI" id="CHEBI:15378"/>
        <dbReference type="ChEBI" id="CHEBI:28938"/>
        <dbReference type="ChEBI" id="CHEBI:30616"/>
        <dbReference type="ChEBI" id="CHEBI:43474"/>
        <dbReference type="ChEBI" id="CHEBI:45075"/>
        <dbReference type="ChEBI" id="CHEBI:61036"/>
        <dbReference type="ChEBI" id="CHEBI:456216"/>
        <dbReference type="EC" id="6.3.4.20"/>
    </reaction>
</comment>
<comment type="cofactor">
    <cofactor evidence="1">
        <name>Zn(2+)</name>
        <dbReference type="ChEBI" id="CHEBI:29105"/>
    </cofactor>
    <text evidence="1">Binds 1 zinc ion per subunit.</text>
</comment>
<comment type="pathway">
    <text evidence="1">Purine metabolism; 7-cyano-7-deazaguanine biosynthesis.</text>
</comment>
<comment type="similarity">
    <text evidence="1">Belongs to the QueC family.</text>
</comment>
<sequence>MAKAVVLLSGGLDSATAAAQAIADGYEAIALSFRYGQRHVRELEAARSVAAALGINQHFFVDVNIAQWGGSSLTDAAEPLPGSGVVAGEIPSTYVPGRNTVFIALALSLAEAQQASAIYLGINAVDYSGYPDCRPDYLAAFQQLASLSSKVGVEGQAPQLVAPLIHDHKVDIVRRAVVLGVPIPATWSCYAGGAEACGRCDSCRIRDRALIEAGYPEWATAIGRSLVSLQP</sequence>
<feature type="chain" id="PRO_0000246945" description="7-cyano-7-deazaguanine synthase">
    <location>
        <begin position="1"/>
        <end position="231"/>
    </location>
</feature>
<feature type="binding site" evidence="1">
    <location>
        <begin position="8"/>
        <end position="18"/>
    </location>
    <ligand>
        <name>ATP</name>
        <dbReference type="ChEBI" id="CHEBI:30616"/>
    </ligand>
</feature>
<feature type="binding site" evidence="1">
    <location>
        <position position="189"/>
    </location>
    <ligand>
        <name>Zn(2+)</name>
        <dbReference type="ChEBI" id="CHEBI:29105"/>
    </ligand>
</feature>
<feature type="binding site" evidence="1">
    <location>
        <position position="197"/>
    </location>
    <ligand>
        <name>Zn(2+)</name>
        <dbReference type="ChEBI" id="CHEBI:29105"/>
    </ligand>
</feature>
<feature type="binding site" evidence="1">
    <location>
        <position position="200"/>
    </location>
    <ligand>
        <name>Zn(2+)</name>
        <dbReference type="ChEBI" id="CHEBI:29105"/>
    </ligand>
</feature>
<feature type="binding site" evidence="1">
    <location>
        <position position="203"/>
    </location>
    <ligand>
        <name>Zn(2+)</name>
        <dbReference type="ChEBI" id="CHEBI:29105"/>
    </ligand>
</feature>
<dbReference type="EC" id="6.3.4.20" evidence="1"/>
<dbReference type="EMBL" id="AP008231">
    <property type="protein sequence ID" value="BAD78411.1"/>
    <property type="molecule type" value="Genomic_DNA"/>
</dbReference>
<dbReference type="RefSeq" id="WP_011242535.1">
    <property type="nucleotide sequence ID" value="NZ_CP085785.1"/>
</dbReference>
<dbReference type="SMR" id="Q5N5K7"/>
<dbReference type="GeneID" id="72430194"/>
<dbReference type="KEGG" id="syc:syc0221_c"/>
<dbReference type="eggNOG" id="COG0603">
    <property type="taxonomic scope" value="Bacteria"/>
</dbReference>
<dbReference type="UniPathway" id="UPA00391"/>
<dbReference type="Proteomes" id="UP000001175">
    <property type="component" value="Chromosome"/>
</dbReference>
<dbReference type="GO" id="GO:0005524">
    <property type="term" value="F:ATP binding"/>
    <property type="evidence" value="ECO:0007669"/>
    <property type="project" value="UniProtKB-UniRule"/>
</dbReference>
<dbReference type="GO" id="GO:0016879">
    <property type="term" value="F:ligase activity, forming carbon-nitrogen bonds"/>
    <property type="evidence" value="ECO:0007669"/>
    <property type="project" value="UniProtKB-UniRule"/>
</dbReference>
<dbReference type="GO" id="GO:0008270">
    <property type="term" value="F:zinc ion binding"/>
    <property type="evidence" value="ECO:0007669"/>
    <property type="project" value="UniProtKB-UniRule"/>
</dbReference>
<dbReference type="GO" id="GO:0008616">
    <property type="term" value="P:queuosine biosynthetic process"/>
    <property type="evidence" value="ECO:0007669"/>
    <property type="project" value="UniProtKB-UniRule"/>
</dbReference>
<dbReference type="CDD" id="cd01995">
    <property type="entry name" value="QueC-like"/>
    <property type="match status" value="1"/>
</dbReference>
<dbReference type="Gene3D" id="3.40.50.620">
    <property type="entry name" value="HUPs"/>
    <property type="match status" value="1"/>
</dbReference>
<dbReference type="HAMAP" id="MF_01633">
    <property type="entry name" value="QueC"/>
    <property type="match status" value="1"/>
</dbReference>
<dbReference type="InterPro" id="IPR018317">
    <property type="entry name" value="QueC"/>
</dbReference>
<dbReference type="InterPro" id="IPR014729">
    <property type="entry name" value="Rossmann-like_a/b/a_fold"/>
</dbReference>
<dbReference type="NCBIfam" id="TIGR00364">
    <property type="entry name" value="7-cyano-7-deazaguanine synthase QueC"/>
    <property type="match status" value="1"/>
</dbReference>
<dbReference type="PANTHER" id="PTHR42914">
    <property type="entry name" value="7-CYANO-7-DEAZAGUANINE SYNTHASE"/>
    <property type="match status" value="1"/>
</dbReference>
<dbReference type="PANTHER" id="PTHR42914:SF1">
    <property type="entry name" value="7-CYANO-7-DEAZAGUANINE SYNTHASE"/>
    <property type="match status" value="1"/>
</dbReference>
<dbReference type="Pfam" id="PF06508">
    <property type="entry name" value="QueC"/>
    <property type="match status" value="1"/>
</dbReference>
<dbReference type="PIRSF" id="PIRSF006293">
    <property type="entry name" value="ExsB"/>
    <property type="match status" value="1"/>
</dbReference>
<dbReference type="SUPFAM" id="SSF52402">
    <property type="entry name" value="Adenine nucleotide alpha hydrolases-like"/>
    <property type="match status" value="1"/>
</dbReference>
<gene>
    <name evidence="1" type="primary">queC</name>
    <name type="ordered locus">syc0221_c</name>
</gene>
<accession>Q5N5K7</accession>
<proteinExistence type="inferred from homology"/>
<name>QUEC_SYNP6</name>
<reference key="1">
    <citation type="journal article" date="2007" name="Photosyn. Res.">
        <title>Complete nucleotide sequence of the freshwater unicellular cyanobacterium Synechococcus elongatus PCC 6301 chromosome: gene content and organization.</title>
        <authorList>
            <person name="Sugita C."/>
            <person name="Ogata K."/>
            <person name="Shikata M."/>
            <person name="Jikuya H."/>
            <person name="Takano J."/>
            <person name="Furumichi M."/>
            <person name="Kanehisa M."/>
            <person name="Omata T."/>
            <person name="Sugiura M."/>
            <person name="Sugita M."/>
        </authorList>
    </citation>
    <scope>NUCLEOTIDE SEQUENCE [LARGE SCALE GENOMIC DNA]</scope>
    <source>
        <strain>ATCC 27144 / PCC 6301 / SAUG 1402/1</strain>
    </source>
</reference>
<evidence type="ECO:0000255" key="1">
    <source>
        <dbReference type="HAMAP-Rule" id="MF_01633"/>
    </source>
</evidence>
<protein>
    <recommendedName>
        <fullName evidence="1">7-cyano-7-deazaguanine synthase</fullName>
        <ecNumber evidence="1">6.3.4.20</ecNumber>
    </recommendedName>
    <alternativeName>
        <fullName evidence="1">7-cyano-7-carbaguanine synthase</fullName>
    </alternativeName>
    <alternativeName>
        <fullName evidence="1">PreQ(0) synthase</fullName>
    </alternativeName>
    <alternativeName>
        <fullName evidence="1">Queuosine biosynthesis protein QueC</fullName>
    </alternativeName>
</protein>
<keyword id="KW-0067">ATP-binding</keyword>
<keyword id="KW-0436">Ligase</keyword>
<keyword id="KW-0479">Metal-binding</keyword>
<keyword id="KW-0547">Nucleotide-binding</keyword>
<keyword id="KW-0671">Queuosine biosynthesis</keyword>
<keyword id="KW-0862">Zinc</keyword>
<organism>
    <name type="scientific">Synechococcus sp. (strain ATCC 27144 / PCC 6301 / SAUG 1402/1)</name>
    <name type="common">Anacystis nidulans</name>
    <dbReference type="NCBI Taxonomy" id="269084"/>
    <lineage>
        <taxon>Bacteria</taxon>
        <taxon>Bacillati</taxon>
        <taxon>Cyanobacteriota</taxon>
        <taxon>Cyanophyceae</taxon>
        <taxon>Synechococcales</taxon>
        <taxon>Synechococcaceae</taxon>
        <taxon>Synechococcus</taxon>
    </lineage>
</organism>